<sequence length="263" mass="30820">MEYLKRLALLISVIILTIFIMGCDSQSDTAENPKEGSKEAQIKKSFSKTLDMYPIKNLEDFYDKEGYRDGEFKKDDKGTWLIRSEIVKQPKGKVMKTRGMQLYINRNTETAKGFFVLKEISENNNRVNKDKEEKYEVKMVGNKIIPTEQINDEKIKKEIENFKFFVQYGNFKNFEKYNNGEFSYNPEAPIYSAKYQLHNDDYNVRQLRKRYDISTKETPKLLLKGGGDLKNSSVGQNDIEFTFVERKGENIYFNDSVEFIPSK</sequence>
<accession>Q5HIN5</accession>
<gene>
    <name type="ordered locus">SACOL0482</name>
</gene>
<keyword id="KW-1003">Cell membrane</keyword>
<keyword id="KW-0449">Lipoprotein</keyword>
<keyword id="KW-0472">Membrane</keyword>
<keyword id="KW-0564">Palmitate</keyword>
<keyword id="KW-0732">Signal</keyword>
<proteinExistence type="inferred from homology"/>
<dbReference type="EMBL" id="CP000046">
    <property type="protein sequence ID" value="AAW37603.1"/>
    <property type="molecule type" value="Genomic_DNA"/>
</dbReference>
<dbReference type="SMR" id="Q5HIN5"/>
<dbReference type="KEGG" id="sac:SACOL0482"/>
<dbReference type="HOGENOM" id="CLU_071589_0_1_9"/>
<dbReference type="Proteomes" id="UP000000530">
    <property type="component" value="Chromosome"/>
</dbReference>
<dbReference type="GO" id="GO:0005886">
    <property type="term" value="C:plasma membrane"/>
    <property type="evidence" value="ECO:0007669"/>
    <property type="project" value="UniProtKB-SubCell"/>
</dbReference>
<dbReference type="Gene3D" id="2.50.20.40">
    <property type="match status" value="1"/>
</dbReference>
<dbReference type="InterPro" id="IPR007595">
    <property type="entry name" value="Csa"/>
</dbReference>
<dbReference type="InterPro" id="IPR038641">
    <property type="entry name" value="Csa_sf"/>
</dbReference>
<dbReference type="NCBIfam" id="TIGR01742">
    <property type="entry name" value="SA_tandem_lipo"/>
    <property type="match status" value="1"/>
</dbReference>
<dbReference type="Pfam" id="PF04507">
    <property type="entry name" value="DUF576"/>
    <property type="match status" value="1"/>
</dbReference>
<dbReference type="PROSITE" id="PS51257">
    <property type="entry name" value="PROKAR_LIPOPROTEIN"/>
    <property type="match status" value="1"/>
</dbReference>
<organism>
    <name type="scientific">Staphylococcus aureus (strain COL)</name>
    <dbReference type="NCBI Taxonomy" id="93062"/>
    <lineage>
        <taxon>Bacteria</taxon>
        <taxon>Bacillati</taxon>
        <taxon>Bacillota</taxon>
        <taxon>Bacilli</taxon>
        <taxon>Bacillales</taxon>
        <taxon>Staphylococcaceae</taxon>
        <taxon>Staphylococcus</taxon>
    </lineage>
</organism>
<comment type="subcellular location">
    <subcellularLocation>
        <location evidence="1">Cell membrane</location>
        <topology evidence="1">Lipid-anchor</topology>
    </subcellularLocation>
</comment>
<comment type="similarity">
    <text evidence="2">Belongs to the staphylococcal tandem lipoprotein family.</text>
</comment>
<name>Y482_STAAC</name>
<feature type="signal peptide" evidence="1">
    <location>
        <begin position="1"/>
        <end position="22"/>
    </location>
</feature>
<feature type="chain" id="PRO_0000278531" description="Uncharacterized lipoprotein SACOL0482">
    <location>
        <begin position="23"/>
        <end position="263"/>
    </location>
</feature>
<feature type="lipid moiety-binding region" description="N-palmitoyl cysteine" evidence="1">
    <location>
        <position position="23"/>
    </location>
</feature>
<feature type="lipid moiety-binding region" description="S-diacylglycerol cysteine" evidence="1">
    <location>
        <position position="23"/>
    </location>
</feature>
<evidence type="ECO:0000255" key="1">
    <source>
        <dbReference type="PROSITE-ProRule" id="PRU00303"/>
    </source>
</evidence>
<evidence type="ECO:0000305" key="2"/>
<protein>
    <recommendedName>
        <fullName>Uncharacterized lipoprotein SACOL0482</fullName>
    </recommendedName>
</protein>
<reference key="1">
    <citation type="journal article" date="2005" name="J. Bacteriol.">
        <title>Insights on evolution of virulence and resistance from the complete genome analysis of an early methicillin-resistant Staphylococcus aureus strain and a biofilm-producing methicillin-resistant Staphylococcus epidermidis strain.</title>
        <authorList>
            <person name="Gill S.R."/>
            <person name="Fouts D.E."/>
            <person name="Archer G.L."/>
            <person name="Mongodin E.F."/>
            <person name="DeBoy R.T."/>
            <person name="Ravel J."/>
            <person name="Paulsen I.T."/>
            <person name="Kolonay J.F."/>
            <person name="Brinkac L.M."/>
            <person name="Beanan M.J."/>
            <person name="Dodson R.J."/>
            <person name="Daugherty S.C."/>
            <person name="Madupu R."/>
            <person name="Angiuoli S.V."/>
            <person name="Durkin A.S."/>
            <person name="Haft D.H."/>
            <person name="Vamathevan J.J."/>
            <person name="Khouri H."/>
            <person name="Utterback T.R."/>
            <person name="Lee C."/>
            <person name="Dimitrov G."/>
            <person name="Jiang L."/>
            <person name="Qin H."/>
            <person name="Weidman J."/>
            <person name="Tran K."/>
            <person name="Kang K.H."/>
            <person name="Hance I.R."/>
            <person name="Nelson K.E."/>
            <person name="Fraser C.M."/>
        </authorList>
    </citation>
    <scope>NUCLEOTIDE SEQUENCE [LARGE SCALE GENOMIC DNA]</scope>
    <source>
        <strain>COL</strain>
    </source>
</reference>